<keyword id="KW-0233">DNA recombination</keyword>
<keyword id="KW-0238">DNA-binding</keyword>
<keyword id="KW-1185">Reference proteome</keyword>
<keyword id="KW-0804">Transcription</keyword>
<keyword id="KW-0805">Transcription regulation</keyword>
<keyword id="KW-0810">Translation regulation</keyword>
<proteinExistence type="inferred from homology"/>
<protein>
    <recommendedName>
        <fullName evidence="1">Integration host factor subunit alpha</fullName>
        <shortName evidence="1">IHF-alpha</shortName>
    </recommendedName>
</protein>
<comment type="function">
    <text evidence="1">This protein is one of the two subunits of integration host factor, a specific DNA-binding protein that functions in genetic recombination as well as in transcriptional and translational control.</text>
</comment>
<comment type="subunit">
    <text evidence="1">Heterodimer of an alpha and a beta chain.</text>
</comment>
<comment type="similarity">
    <text evidence="1">Belongs to the bacterial histone-like protein family.</text>
</comment>
<feature type="chain" id="PRO_0000277767" description="Integration host factor subunit alpha">
    <location>
        <begin position="1"/>
        <end position="102"/>
    </location>
</feature>
<dbReference type="EMBL" id="CP000267">
    <property type="protein sequence ID" value="ABD69076.1"/>
    <property type="molecule type" value="Genomic_DNA"/>
</dbReference>
<dbReference type="SMR" id="Q21YS7"/>
<dbReference type="STRING" id="338969.Rfer_1342"/>
<dbReference type="KEGG" id="rfr:Rfer_1342"/>
<dbReference type="eggNOG" id="COG0776">
    <property type="taxonomic scope" value="Bacteria"/>
</dbReference>
<dbReference type="HOGENOM" id="CLU_105066_1_0_4"/>
<dbReference type="Proteomes" id="UP000008332">
    <property type="component" value="Chromosome"/>
</dbReference>
<dbReference type="GO" id="GO:0005829">
    <property type="term" value="C:cytosol"/>
    <property type="evidence" value="ECO:0007669"/>
    <property type="project" value="TreeGrafter"/>
</dbReference>
<dbReference type="GO" id="GO:0003677">
    <property type="term" value="F:DNA binding"/>
    <property type="evidence" value="ECO:0007669"/>
    <property type="project" value="UniProtKB-UniRule"/>
</dbReference>
<dbReference type="GO" id="GO:0030527">
    <property type="term" value="F:structural constituent of chromatin"/>
    <property type="evidence" value="ECO:0007669"/>
    <property type="project" value="InterPro"/>
</dbReference>
<dbReference type="GO" id="GO:0006310">
    <property type="term" value="P:DNA recombination"/>
    <property type="evidence" value="ECO:0007669"/>
    <property type="project" value="UniProtKB-UniRule"/>
</dbReference>
<dbReference type="GO" id="GO:0009893">
    <property type="term" value="P:positive regulation of metabolic process"/>
    <property type="evidence" value="ECO:0007669"/>
    <property type="project" value="UniProtKB-ARBA"/>
</dbReference>
<dbReference type="GO" id="GO:0006355">
    <property type="term" value="P:regulation of DNA-templated transcription"/>
    <property type="evidence" value="ECO:0007669"/>
    <property type="project" value="UniProtKB-UniRule"/>
</dbReference>
<dbReference type="GO" id="GO:0006417">
    <property type="term" value="P:regulation of translation"/>
    <property type="evidence" value="ECO:0007669"/>
    <property type="project" value="UniProtKB-UniRule"/>
</dbReference>
<dbReference type="CDD" id="cd13835">
    <property type="entry name" value="IHF_A"/>
    <property type="match status" value="1"/>
</dbReference>
<dbReference type="Gene3D" id="4.10.520.10">
    <property type="entry name" value="IHF-like DNA-binding proteins"/>
    <property type="match status" value="1"/>
</dbReference>
<dbReference type="HAMAP" id="MF_00380">
    <property type="entry name" value="IHF_alpha"/>
    <property type="match status" value="1"/>
</dbReference>
<dbReference type="InterPro" id="IPR000119">
    <property type="entry name" value="Hist_DNA-bd"/>
</dbReference>
<dbReference type="InterPro" id="IPR020816">
    <property type="entry name" value="Histone-like_DNA-bd_CS"/>
</dbReference>
<dbReference type="InterPro" id="IPR010992">
    <property type="entry name" value="IHF-like_DNA-bd_dom_sf"/>
</dbReference>
<dbReference type="InterPro" id="IPR005684">
    <property type="entry name" value="IHF_alpha"/>
</dbReference>
<dbReference type="NCBIfam" id="TIGR00987">
    <property type="entry name" value="himA"/>
    <property type="match status" value="1"/>
</dbReference>
<dbReference type="NCBIfam" id="NF001401">
    <property type="entry name" value="PRK00285.1"/>
    <property type="match status" value="1"/>
</dbReference>
<dbReference type="PANTHER" id="PTHR33175">
    <property type="entry name" value="DNA-BINDING PROTEIN HU"/>
    <property type="match status" value="1"/>
</dbReference>
<dbReference type="PANTHER" id="PTHR33175:SF2">
    <property type="entry name" value="INTEGRATION HOST FACTOR SUBUNIT ALPHA"/>
    <property type="match status" value="1"/>
</dbReference>
<dbReference type="Pfam" id="PF00216">
    <property type="entry name" value="Bac_DNA_binding"/>
    <property type="match status" value="1"/>
</dbReference>
<dbReference type="PRINTS" id="PR01727">
    <property type="entry name" value="DNABINDINGHU"/>
</dbReference>
<dbReference type="SMART" id="SM00411">
    <property type="entry name" value="BHL"/>
    <property type="match status" value="1"/>
</dbReference>
<dbReference type="SUPFAM" id="SSF47729">
    <property type="entry name" value="IHF-like DNA-binding proteins"/>
    <property type="match status" value="1"/>
</dbReference>
<dbReference type="PROSITE" id="PS00045">
    <property type="entry name" value="HISTONE_LIKE"/>
    <property type="match status" value="1"/>
</dbReference>
<name>IHFA_ALBFT</name>
<gene>
    <name evidence="1" type="primary">ihfA</name>
    <name evidence="1" type="synonym">himA</name>
    <name type="ordered locus">Rfer_1342</name>
</gene>
<reference key="1">
    <citation type="submission" date="2006-02" db="EMBL/GenBank/DDBJ databases">
        <title>Complete sequence of chromosome of Rhodoferax ferrireducens DSM 15236.</title>
        <authorList>
            <person name="Copeland A."/>
            <person name="Lucas S."/>
            <person name="Lapidus A."/>
            <person name="Barry K."/>
            <person name="Detter J.C."/>
            <person name="Glavina del Rio T."/>
            <person name="Hammon N."/>
            <person name="Israni S."/>
            <person name="Pitluck S."/>
            <person name="Brettin T."/>
            <person name="Bruce D."/>
            <person name="Han C."/>
            <person name="Tapia R."/>
            <person name="Gilna P."/>
            <person name="Kiss H."/>
            <person name="Schmutz J."/>
            <person name="Larimer F."/>
            <person name="Land M."/>
            <person name="Kyrpides N."/>
            <person name="Ivanova N."/>
            <person name="Richardson P."/>
        </authorList>
    </citation>
    <scope>NUCLEOTIDE SEQUENCE [LARGE SCALE GENOMIC DNA]</scope>
    <source>
        <strain>ATCC BAA-621 / DSM 15236 / T118</strain>
    </source>
</reference>
<sequence length="102" mass="11420">MPALTKAQLAELLFEKIGLNKRESKDMVDAFFDLVADSLLKGEDVKISGFGNFQIRTKAPRPGRNPRTGETIPIQARRVVTFHAGYKLKEQIQDQELVPLAP</sequence>
<organism>
    <name type="scientific">Albidiferax ferrireducens (strain ATCC BAA-621 / DSM 15236 / T118)</name>
    <name type="common">Rhodoferax ferrireducens</name>
    <dbReference type="NCBI Taxonomy" id="338969"/>
    <lineage>
        <taxon>Bacteria</taxon>
        <taxon>Pseudomonadati</taxon>
        <taxon>Pseudomonadota</taxon>
        <taxon>Betaproteobacteria</taxon>
        <taxon>Burkholderiales</taxon>
        <taxon>Comamonadaceae</taxon>
        <taxon>Rhodoferax</taxon>
    </lineage>
</organism>
<accession>Q21YS7</accession>
<evidence type="ECO:0000255" key="1">
    <source>
        <dbReference type="HAMAP-Rule" id="MF_00380"/>
    </source>
</evidence>